<accession>B9DRR4</accession>
<dbReference type="EMBL" id="AM946015">
    <property type="protein sequence ID" value="CAR41505.1"/>
    <property type="molecule type" value="Genomic_DNA"/>
</dbReference>
<dbReference type="RefSeq" id="WP_012658169.1">
    <property type="nucleotide sequence ID" value="NC_012004.1"/>
</dbReference>
<dbReference type="SMR" id="B9DRR4"/>
<dbReference type="STRING" id="218495.SUB0650"/>
<dbReference type="GeneID" id="93825934"/>
<dbReference type="KEGG" id="sub:SUB0650"/>
<dbReference type="eggNOG" id="COG4477">
    <property type="taxonomic scope" value="Bacteria"/>
</dbReference>
<dbReference type="HOGENOM" id="CLU_034079_2_0_9"/>
<dbReference type="OrthoDB" id="1654473at2"/>
<dbReference type="Proteomes" id="UP000000449">
    <property type="component" value="Chromosome"/>
</dbReference>
<dbReference type="GO" id="GO:0005886">
    <property type="term" value="C:plasma membrane"/>
    <property type="evidence" value="ECO:0007669"/>
    <property type="project" value="UniProtKB-SubCell"/>
</dbReference>
<dbReference type="GO" id="GO:0005940">
    <property type="term" value="C:septin ring"/>
    <property type="evidence" value="ECO:0007669"/>
    <property type="project" value="InterPro"/>
</dbReference>
<dbReference type="GO" id="GO:0000917">
    <property type="term" value="P:division septum assembly"/>
    <property type="evidence" value="ECO:0007669"/>
    <property type="project" value="UniProtKB-KW"/>
</dbReference>
<dbReference type="GO" id="GO:0000921">
    <property type="term" value="P:septin ring assembly"/>
    <property type="evidence" value="ECO:0007669"/>
    <property type="project" value="InterPro"/>
</dbReference>
<dbReference type="HAMAP" id="MF_00728">
    <property type="entry name" value="EzrA"/>
    <property type="match status" value="1"/>
</dbReference>
<dbReference type="InterPro" id="IPR010379">
    <property type="entry name" value="EzrA"/>
</dbReference>
<dbReference type="NCBIfam" id="NF003407">
    <property type="entry name" value="PRK04778.1-1"/>
    <property type="match status" value="1"/>
</dbReference>
<dbReference type="NCBIfam" id="NF003410">
    <property type="entry name" value="PRK04778.1-4"/>
    <property type="match status" value="1"/>
</dbReference>
<dbReference type="Pfam" id="PF06160">
    <property type="entry name" value="EzrA"/>
    <property type="match status" value="1"/>
</dbReference>
<evidence type="ECO:0000255" key="1">
    <source>
        <dbReference type="HAMAP-Rule" id="MF_00728"/>
    </source>
</evidence>
<protein>
    <recommendedName>
        <fullName evidence="1">Septation ring formation regulator EzrA</fullName>
    </recommendedName>
</protein>
<organism>
    <name type="scientific">Streptococcus uberis (strain ATCC BAA-854 / 0140J)</name>
    <dbReference type="NCBI Taxonomy" id="218495"/>
    <lineage>
        <taxon>Bacteria</taxon>
        <taxon>Bacillati</taxon>
        <taxon>Bacillota</taxon>
        <taxon>Bacilli</taxon>
        <taxon>Lactobacillales</taxon>
        <taxon>Streptococcaceae</taxon>
        <taxon>Streptococcus</taxon>
    </lineage>
</organism>
<gene>
    <name evidence="1" type="primary">ezrA</name>
    <name type="ordered locus">SUB0650</name>
</gene>
<reference key="1">
    <citation type="journal article" date="2009" name="BMC Genomics">
        <title>Evidence for niche adaptation in the genome of the bovine pathogen Streptococcus uberis.</title>
        <authorList>
            <person name="Ward P.N."/>
            <person name="Holden M.T.G."/>
            <person name="Leigh J.A."/>
            <person name="Lennard N."/>
            <person name="Bignell A."/>
            <person name="Barron A."/>
            <person name="Clark L."/>
            <person name="Quail M.A."/>
            <person name="Woodward J."/>
            <person name="Barrell B.G."/>
            <person name="Egan S.A."/>
            <person name="Field T.R."/>
            <person name="Maskell D."/>
            <person name="Kehoe M."/>
            <person name="Dowson C.G."/>
            <person name="Chanter N."/>
            <person name="Whatmore A.M."/>
            <person name="Bentley S.D."/>
            <person name="Parkhill J."/>
        </authorList>
    </citation>
    <scope>NUCLEOTIDE SEQUENCE [LARGE SCALE GENOMIC DNA]</scope>
    <source>
        <strain>ATCC BAA-854 / 0140J</strain>
    </source>
</reference>
<name>EZRA_STRU0</name>
<sequence length="574" mass="66465">MSSGIILLIVAIVLLVIIAYLIGVIIRKRNDSMIGTLEDRKQHLFGLPVNEEIEEVKELHLIGQSQTSFREWNQKWVDLTLNSFADIENHLFEAEKYNDTFNFIRAKHEINNVESQLNLVEEDITSIREALSILKEQEEKNSARVTHALDLYEKLQSSVAENDSHFGTTKPEIEKQMKNIETEFSQFVTLNSSGDPVEASEVLDRAEEHTIALGQITEQIPAIVAKLEDEFPDQLDDLESGYRRLLEDNYHFAENNIEEKFQEIREAIRSNASELVSLDLDRAREENSHIQERIDNMYALFEHEIKAFKVSAKHSKIIPSYLEHAKSNNDKLKEEMTRLSRKYILNENQASTVQGFEKEIEDVEKNVLELAKDFKGQEIPYSELQVVFEKNLKTLSAVESGQMEVFESIKNIENIEEDARKEADLYVTQLHMIKRFMEKRHLPGIPQDYLNVFFTTSTQLEALMDELSKGKINIEAVSRLRDVASASIANLEDYTYQVVENATLTEQLLQYSNRYRSFEAGVQNSFEIAMHLFEVEYDYQASFDEISYALETVEPGVTDRFVSSYERTREHIRF</sequence>
<keyword id="KW-0131">Cell cycle</keyword>
<keyword id="KW-0132">Cell division</keyword>
<keyword id="KW-1003">Cell membrane</keyword>
<keyword id="KW-0175">Coiled coil</keyword>
<keyword id="KW-0472">Membrane</keyword>
<keyword id="KW-1185">Reference proteome</keyword>
<keyword id="KW-0717">Septation</keyword>
<keyword id="KW-0812">Transmembrane</keyword>
<keyword id="KW-1133">Transmembrane helix</keyword>
<comment type="function">
    <text evidence="1">Negative regulator of FtsZ ring formation; modulates the frequency and position of FtsZ ring formation. Inhibits FtsZ ring formation at polar sites. Interacts either with FtsZ or with one of its binding partners to promote depolymerization.</text>
</comment>
<comment type="subcellular location">
    <subcellularLocation>
        <location evidence="1">Cell membrane</location>
        <topology evidence="1">Single-pass membrane protein</topology>
    </subcellularLocation>
    <text evidence="1">Colocalized with FtsZ to the nascent septal site.</text>
</comment>
<comment type="similarity">
    <text evidence="1">Belongs to the EzrA family.</text>
</comment>
<feature type="chain" id="PRO_1000148074" description="Septation ring formation regulator EzrA">
    <location>
        <begin position="1"/>
        <end position="574"/>
    </location>
</feature>
<feature type="topological domain" description="Extracellular" evidence="1">
    <location>
        <begin position="1"/>
        <end position="7"/>
    </location>
</feature>
<feature type="transmembrane region" description="Helical" evidence="1">
    <location>
        <begin position="8"/>
        <end position="26"/>
    </location>
</feature>
<feature type="topological domain" description="Cytoplasmic" evidence="1">
    <location>
        <begin position="27"/>
        <end position="574"/>
    </location>
</feature>
<feature type="coiled-coil region" evidence="1">
    <location>
        <begin position="102"/>
        <end position="140"/>
    </location>
</feature>
<feature type="coiled-coil region" evidence="1">
    <location>
        <begin position="243"/>
        <end position="379"/>
    </location>
</feature>
<feature type="coiled-coil region" evidence="1">
    <location>
        <begin position="459"/>
        <end position="520"/>
    </location>
</feature>
<proteinExistence type="inferred from homology"/>